<evidence type="ECO:0000255" key="1">
    <source>
        <dbReference type="HAMAP-Rule" id="MF_00123"/>
    </source>
</evidence>
<accession>B8CI29</accession>
<keyword id="KW-0030">Aminoacyl-tRNA synthetase</keyword>
<keyword id="KW-0067">ATP-binding</keyword>
<keyword id="KW-0963">Cytoplasm</keyword>
<keyword id="KW-0436">Ligase</keyword>
<keyword id="KW-0547">Nucleotide-binding</keyword>
<keyword id="KW-0648">Protein biosynthesis</keyword>
<protein>
    <recommendedName>
        <fullName evidence="1">Arginine--tRNA ligase</fullName>
        <ecNumber evidence="1">6.1.1.19</ecNumber>
    </recommendedName>
    <alternativeName>
        <fullName evidence="1">Arginyl-tRNA synthetase</fullName>
        <shortName evidence="1">ArgRS</shortName>
    </alternativeName>
</protein>
<organism>
    <name type="scientific">Shewanella piezotolerans (strain WP3 / JCM 13877)</name>
    <dbReference type="NCBI Taxonomy" id="225849"/>
    <lineage>
        <taxon>Bacteria</taxon>
        <taxon>Pseudomonadati</taxon>
        <taxon>Pseudomonadota</taxon>
        <taxon>Gammaproteobacteria</taxon>
        <taxon>Alteromonadales</taxon>
        <taxon>Shewanellaceae</taxon>
        <taxon>Shewanella</taxon>
    </lineage>
</organism>
<reference key="1">
    <citation type="journal article" date="2008" name="PLoS ONE">
        <title>Environmental adaptation: genomic analysis of the piezotolerant and psychrotolerant deep-sea iron reducing bacterium Shewanella piezotolerans WP3.</title>
        <authorList>
            <person name="Wang F."/>
            <person name="Wang J."/>
            <person name="Jian H."/>
            <person name="Zhang B."/>
            <person name="Li S."/>
            <person name="Wang F."/>
            <person name="Zeng X."/>
            <person name="Gao L."/>
            <person name="Bartlett D.H."/>
            <person name="Yu J."/>
            <person name="Hu S."/>
            <person name="Xiao X."/>
        </authorList>
    </citation>
    <scope>NUCLEOTIDE SEQUENCE [LARGE SCALE GENOMIC DNA]</scope>
    <source>
        <strain>WP3 / JCM 13877</strain>
    </source>
</reference>
<name>SYR_SHEPW</name>
<comment type="catalytic activity">
    <reaction evidence="1">
        <text>tRNA(Arg) + L-arginine + ATP = L-arginyl-tRNA(Arg) + AMP + diphosphate</text>
        <dbReference type="Rhea" id="RHEA:20301"/>
        <dbReference type="Rhea" id="RHEA-COMP:9658"/>
        <dbReference type="Rhea" id="RHEA-COMP:9673"/>
        <dbReference type="ChEBI" id="CHEBI:30616"/>
        <dbReference type="ChEBI" id="CHEBI:32682"/>
        <dbReference type="ChEBI" id="CHEBI:33019"/>
        <dbReference type="ChEBI" id="CHEBI:78442"/>
        <dbReference type="ChEBI" id="CHEBI:78513"/>
        <dbReference type="ChEBI" id="CHEBI:456215"/>
        <dbReference type="EC" id="6.1.1.19"/>
    </reaction>
</comment>
<comment type="subunit">
    <text evidence="1">Monomer.</text>
</comment>
<comment type="subcellular location">
    <subcellularLocation>
        <location evidence="1">Cytoplasm</location>
    </subcellularLocation>
</comment>
<comment type="similarity">
    <text evidence="1">Belongs to the class-I aminoacyl-tRNA synthetase family.</text>
</comment>
<feature type="chain" id="PRO_1000198931" description="Arginine--tRNA ligase">
    <location>
        <begin position="1"/>
        <end position="581"/>
    </location>
</feature>
<feature type="short sequence motif" description="'HIGH' region">
    <location>
        <begin position="126"/>
        <end position="136"/>
    </location>
</feature>
<sequence length="581" mass="65067">MKSHTQSLLAESLNALKQQGVVPADFEARIQVDRTKDKSHGDFATNLAMMLTKAARKNPREIAQLIIDNLPQSSHVEKVEIAGPGFINFFIDDNALANQLMDALNSDHLGVTLPESQTVVVDYSSPNLAKEMHVGHLRSTIIGDSVVRSLEFMGHNVIRQNHVGDWGTQFGMLLAYMEELRAANGEQAQIELSDLENFYRAAKVRFDESEDFANRARKLVVALQSGDEYCNKLWREFNDISLSHCHEIYERLGVSLTRQDVRGESSYNDDLEQVVADLDSQGLLSESNGAKVVFQEEFKNKEGEPLPVIIQKADGGYLYATSDMAAMRYRSNVLKADRALYFVDLRQALHFQQVFKLAKTAKFVREEMSFEHMGFGTMNGEDGRPFKTRSGGVVKLIDLLKEADTRALELVRSKNPDMDEAELAEIARVVGIASVKYADLSKNRTSDYIFSFEQMLSFEGNTAPYLLYAYTRVAGIFKRAQDVDLSDAKIVLEHEKEKDLGTKLAQFGEVMNRVVNKGQPHALCAYLFELAGAFSSFYEACPVLAADTEAQKKSRLLLAQLTAKTLKQGLNLLGLETLERM</sequence>
<dbReference type="EC" id="6.1.1.19" evidence="1"/>
<dbReference type="EMBL" id="CP000472">
    <property type="protein sequence ID" value="ACJ27305.1"/>
    <property type="molecule type" value="Genomic_DNA"/>
</dbReference>
<dbReference type="RefSeq" id="WP_020910686.1">
    <property type="nucleotide sequence ID" value="NC_011566.1"/>
</dbReference>
<dbReference type="SMR" id="B8CI29"/>
<dbReference type="STRING" id="225849.swp_0474"/>
<dbReference type="KEGG" id="swp:swp_0474"/>
<dbReference type="eggNOG" id="COG0018">
    <property type="taxonomic scope" value="Bacteria"/>
</dbReference>
<dbReference type="HOGENOM" id="CLU_006406_5_1_6"/>
<dbReference type="OrthoDB" id="9803211at2"/>
<dbReference type="Proteomes" id="UP000000753">
    <property type="component" value="Chromosome"/>
</dbReference>
<dbReference type="GO" id="GO:0005737">
    <property type="term" value="C:cytoplasm"/>
    <property type="evidence" value="ECO:0007669"/>
    <property type="project" value="UniProtKB-SubCell"/>
</dbReference>
<dbReference type="GO" id="GO:0004814">
    <property type="term" value="F:arginine-tRNA ligase activity"/>
    <property type="evidence" value="ECO:0007669"/>
    <property type="project" value="UniProtKB-UniRule"/>
</dbReference>
<dbReference type="GO" id="GO:0005524">
    <property type="term" value="F:ATP binding"/>
    <property type="evidence" value="ECO:0007669"/>
    <property type="project" value="UniProtKB-UniRule"/>
</dbReference>
<dbReference type="GO" id="GO:0006420">
    <property type="term" value="P:arginyl-tRNA aminoacylation"/>
    <property type="evidence" value="ECO:0007669"/>
    <property type="project" value="UniProtKB-UniRule"/>
</dbReference>
<dbReference type="CDD" id="cd07956">
    <property type="entry name" value="Anticodon_Ia_Arg"/>
    <property type="match status" value="1"/>
</dbReference>
<dbReference type="CDD" id="cd00671">
    <property type="entry name" value="ArgRS_core"/>
    <property type="match status" value="1"/>
</dbReference>
<dbReference type="FunFam" id="1.10.730.10:FF:000008">
    <property type="entry name" value="Arginine--tRNA ligase"/>
    <property type="match status" value="1"/>
</dbReference>
<dbReference type="FunFam" id="3.30.1360.70:FF:000003">
    <property type="entry name" value="Arginine--tRNA ligase"/>
    <property type="match status" value="1"/>
</dbReference>
<dbReference type="FunFam" id="3.40.50.620:FF:000030">
    <property type="entry name" value="Arginine--tRNA ligase"/>
    <property type="match status" value="1"/>
</dbReference>
<dbReference type="Gene3D" id="3.30.1360.70">
    <property type="entry name" value="Arginyl tRNA synthetase N-terminal domain"/>
    <property type="match status" value="1"/>
</dbReference>
<dbReference type="Gene3D" id="3.40.50.620">
    <property type="entry name" value="HUPs"/>
    <property type="match status" value="1"/>
</dbReference>
<dbReference type="Gene3D" id="1.10.730.10">
    <property type="entry name" value="Isoleucyl-tRNA Synthetase, Domain 1"/>
    <property type="match status" value="1"/>
</dbReference>
<dbReference type="HAMAP" id="MF_00123">
    <property type="entry name" value="Arg_tRNA_synth"/>
    <property type="match status" value="1"/>
</dbReference>
<dbReference type="InterPro" id="IPR001412">
    <property type="entry name" value="aa-tRNA-synth_I_CS"/>
</dbReference>
<dbReference type="InterPro" id="IPR001278">
    <property type="entry name" value="Arg-tRNA-ligase"/>
</dbReference>
<dbReference type="InterPro" id="IPR005148">
    <property type="entry name" value="Arg-tRNA-synth_N"/>
</dbReference>
<dbReference type="InterPro" id="IPR036695">
    <property type="entry name" value="Arg-tRNA-synth_N_sf"/>
</dbReference>
<dbReference type="InterPro" id="IPR035684">
    <property type="entry name" value="ArgRS_core"/>
</dbReference>
<dbReference type="InterPro" id="IPR008909">
    <property type="entry name" value="DALR_anticod-bd"/>
</dbReference>
<dbReference type="InterPro" id="IPR014729">
    <property type="entry name" value="Rossmann-like_a/b/a_fold"/>
</dbReference>
<dbReference type="InterPro" id="IPR009080">
    <property type="entry name" value="tRNAsynth_Ia_anticodon-bd"/>
</dbReference>
<dbReference type="NCBIfam" id="TIGR00456">
    <property type="entry name" value="argS"/>
    <property type="match status" value="1"/>
</dbReference>
<dbReference type="PANTHER" id="PTHR11956:SF5">
    <property type="entry name" value="ARGININE--TRNA LIGASE, CYTOPLASMIC"/>
    <property type="match status" value="1"/>
</dbReference>
<dbReference type="PANTHER" id="PTHR11956">
    <property type="entry name" value="ARGINYL-TRNA SYNTHETASE"/>
    <property type="match status" value="1"/>
</dbReference>
<dbReference type="Pfam" id="PF03485">
    <property type="entry name" value="Arg_tRNA_synt_N"/>
    <property type="match status" value="1"/>
</dbReference>
<dbReference type="Pfam" id="PF05746">
    <property type="entry name" value="DALR_1"/>
    <property type="match status" value="1"/>
</dbReference>
<dbReference type="Pfam" id="PF00750">
    <property type="entry name" value="tRNA-synt_1d"/>
    <property type="match status" value="1"/>
</dbReference>
<dbReference type="PRINTS" id="PR01038">
    <property type="entry name" value="TRNASYNTHARG"/>
</dbReference>
<dbReference type="SMART" id="SM01016">
    <property type="entry name" value="Arg_tRNA_synt_N"/>
    <property type="match status" value="1"/>
</dbReference>
<dbReference type="SMART" id="SM00836">
    <property type="entry name" value="DALR_1"/>
    <property type="match status" value="1"/>
</dbReference>
<dbReference type="SUPFAM" id="SSF47323">
    <property type="entry name" value="Anticodon-binding domain of a subclass of class I aminoacyl-tRNA synthetases"/>
    <property type="match status" value="1"/>
</dbReference>
<dbReference type="SUPFAM" id="SSF55190">
    <property type="entry name" value="Arginyl-tRNA synthetase (ArgRS), N-terminal 'additional' domain"/>
    <property type="match status" value="1"/>
</dbReference>
<dbReference type="SUPFAM" id="SSF52374">
    <property type="entry name" value="Nucleotidylyl transferase"/>
    <property type="match status" value="1"/>
</dbReference>
<dbReference type="PROSITE" id="PS00178">
    <property type="entry name" value="AA_TRNA_LIGASE_I"/>
    <property type="match status" value="1"/>
</dbReference>
<gene>
    <name evidence="1" type="primary">argS</name>
    <name type="ordered locus">swp_0474</name>
</gene>
<proteinExistence type="inferred from homology"/>